<evidence type="ECO:0000255" key="1">
    <source>
        <dbReference type="HAMAP-Rule" id="MF_01151"/>
    </source>
</evidence>
<name>GRPE_BAUCH</name>
<dbReference type="EMBL" id="CP000238">
    <property type="protein sequence ID" value="ABF14303.1"/>
    <property type="molecule type" value="Genomic_DNA"/>
</dbReference>
<dbReference type="RefSeq" id="WP_011520771.1">
    <property type="nucleotide sequence ID" value="NC_007984.1"/>
</dbReference>
<dbReference type="SMR" id="Q1LSM6"/>
<dbReference type="STRING" id="374463.BCI_0612"/>
<dbReference type="KEGG" id="bci:BCI_0612"/>
<dbReference type="HOGENOM" id="CLU_057217_6_0_6"/>
<dbReference type="OrthoDB" id="9789811at2"/>
<dbReference type="Proteomes" id="UP000002427">
    <property type="component" value="Chromosome"/>
</dbReference>
<dbReference type="GO" id="GO:0005829">
    <property type="term" value="C:cytosol"/>
    <property type="evidence" value="ECO:0007669"/>
    <property type="project" value="TreeGrafter"/>
</dbReference>
<dbReference type="GO" id="GO:0000774">
    <property type="term" value="F:adenyl-nucleotide exchange factor activity"/>
    <property type="evidence" value="ECO:0007669"/>
    <property type="project" value="InterPro"/>
</dbReference>
<dbReference type="GO" id="GO:0042803">
    <property type="term" value="F:protein homodimerization activity"/>
    <property type="evidence" value="ECO:0007669"/>
    <property type="project" value="InterPro"/>
</dbReference>
<dbReference type="GO" id="GO:0051087">
    <property type="term" value="F:protein-folding chaperone binding"/>
    <property type="evidence" value="ECO:0007669"/>
    <property type="project" value="InterPro"/>
</dbReference>
<dbReference type="GO" id="GO:0051082">
    <property type="term" value="F:unfolded protein binding"/>
    <property type="evidence" value="ECO:0007669"/>
    <property type="project" value="TreeGrafter"/>
</dbReference>
<dbReference type="GO" id="GO:0006457">
    <property type="term" value="P:protein folding"/>
    <property type="evidence" value="ECO:0007669"/>
    <property type="project" value="InterPro"/>
</dbReference>
<dbReference type="CDD" id="cd00446">
    <property type="entry name" value="GrpE"/>
    <property type="match status" value="1"/>
</dbReference>
<dbReference type="FunFam" id="2.30.22.10:FF:000001">
    <property type="entry name" value="Protein GrpE"/>
    <property type="match status" value="1"/>
</dbReference>
<dbReference type="Gene3D" id="3.90.20.20">
    <property type="match status" value="1"/>
</dbReference>
<dbReference type="Gene3D" id="2.30.22.10">
    <property type="entry name" value="Head domain of nucleotide exchange factor GrpE"/>
    <property type="match status" value="1"/>
</dbReference>
<dbReference type="HAMAP" id="MF_01151">
    <property type="entry name" value="GrpE"/>
    <property type="match status" value="1"/>
</dbReference>
<dbReference type="InterPro" id="IPR000740">
    <property type="entry name" value="GrpE"/>
</dbReference>
<dbReference type="InterPro" id="IPR013805">
    <property type="entry name" value="GrpE_coiled_coil"/>
</dbReference>
<dbReference type="InterPro" id="IPR009012">
    <property type="entry name" value="GrpE_head"/>
</dbReference>
<dbReference type="NCBIfam" id="NF010738">
    <property type="entry name" value="PRK14140.1"/>
    <property type="match status" value="1"/>
</dbReference>
<dbReference type="NCBIfam" id="NF010748">
    <property type="entry name" value="PRK14150.1"/>
    <property type="match status" value="1"/>
</dbReference>
<dbReference type="PANTHER" id="PTHR21237">
    <property type="entry name" value="GRPE PROTEIN"/>
    <property type="match status" value="1"/>
</dbReference>
<dbReference type="PANTHER" id="PTHR21237:SF23">
    <property type="entry name" value="GRPE PROTEIN HOMOLOG, MITOCHONDRIAL"/>
    <property type="match status" value="1"/>
</dbReference>
<dbReference type="Pfam" id="PF01025">
    <property type="entry name" value="GrpE"/>
    <property type="match status" value="1"/>
</dbReference>
<dbReference type="PRINTS" id="PR00773">
    <property type="entry name" value="GRPEPROTEIN"/>
</dbReference>
<dbReference type="SUPFAM" id="SSF58014">
    <property type="entry name" value="Coiled-coil domain of nucleotide exchange factor GrpE"/>
    <property type="match status" value="1"/>
</dbReference>
<dbReference type="SUPFAM" id="SSF51064">
    <property type="entry name" value="Head domain of nucleotide exchange factor GrpE"/>
    <property type="match status" value="1"/>
</dbReference>
<dbReference type="PROSITE" id="PS01071">
    <property type="entry name" value="GRPE"/>
    <property type="match status" value="1"/>
</dbReference>
<comment type="function">
    <text evidence="1">Participates actively in the response to hyperosmotic and heat shock by preventing the aggregation of stress-denatured proteins, in association with DnaK and GrpE. It is the nucleotide exchange factor for DnaK and may function as a thermosensor. Unfolded proteins bind initially to DnaJ; upon interaction with the DnaJ-bound protein, DnaK hydrolyzes its bound ATP, resulting in the formation of a stable complex. GrpE releases ADP from DnaK; ATP binding to DnaK triggers the release of the substrate protein, thus completing the reaction cycle. Several rounds of ATP-dependent interactions between DnaJ, DnaK and GrpE are required for fully efficient folding.</text>
</comment>
<comment type="subunit">
    <text evidence="1">Homodimer.</text>
</comment>
<comment type="subcellular location">
    <subcellularLocation>
        <location evidence="1">Cytoplasm</location>
    </subcellularLocation>
</comment>
<comment type="similarity">
    <text evidence="1">Belongs to the GrpE family.</text>
</comment>
<gene>
    <name evidence="1" type="primary">grpE</name>
    <name type="ordered locus">BCI_0612</name>
</gene>
<keyword id="KW-0143">Chaperone</keyword>
<keyword id="KW-0963">Cytoplasm</keyword>
<keyword id="KW-1185">Reference proteome</keyword>
<keyword id="KW-0346">Stress response</keyword>
<reference key="1">
    <citation type="journal article" date="2006" name="PLoS Biol.">
        <title>Metabolic complementarity and genomics of the dual bacterial symbiosis of sharpshooters.</title>
        <authorList>
            <person name="Wu D."/>
            <person name="Daugherty S.C."/>
            <person name="Van Aken S.E."/>
            <person name="Pai G.H."/>
            <person name="Watkins K.L."/>
            <person name="Khouri H."/>
            <person name="Tallon L.J."/>
            <person name="Zaborsky J.M."/>
            <person name="Dunbar H.E."/>
            <person name="Tran P.L."/>
            <person name="Moran N.A."/>
            <person name="Eisen J.A."/>
        </authorList>
    </citation>
    <scope>NUCLEOTIDE SEQUENCE [LARGE SCALE GENOMIC DNA]</scope>
</reference>
<feature type="chain" id="PRO_1000053544" description="Protein GrpE">
    <location>
        <begin position="1"/>
        <end position="198"/>
    </location>
</feature>
<protein>
    <recommendedName>
        <fullName evidence="1">Protein GrpE</fullName>
    </recommendedName>
    <alternativeName>
        <fullName evidence="1">HSP-70 cofactor</fullName>
    </alternativeName>
</protein>
<proteinExistence type="inferred from homology"/>
<accession>Q1LSM6</accession>
<sequence>MISQDKNYSDDQISQDSEIDTIEAVSETEAVSETNEIIDMRDDRIQKLEVELVQAQQRERDLLLRSKAEIENMRRRNEIEVEKVYKFSLERFVSELLPVIDNLERALEMSDKSSQNLASTIEGIELTLKSLLNVVQKFGIKVVSETHVPFNPDIHQAMTILESEEHEPNHVIIVMQKGYLLNGRLIRPAMVTVSKTKS</sequence>
<organism>
    <name type="scientific">Baumannia cicadellinicola subsp. Homalodisca coagulata</name>
    <dbReference type="NCBI Taxonomy" id="374463"/>
    <lineage>
        <taxon>Bacteria</taxon>
        <taxon>Pseudomonadati</taxon>
        <taxon>Pseudomonadota</taxon>
        <taxon>Gammaproteobacteria</taxon>
        <taxon>Candidatus Palibaumannia</taxon>
    </lineage>
</organism>